<sequence>MKPYYVTTAIAYPNAAPHVGHAYEYIATDAIARFKRLDGYDVRFLTGTDEHGLKVAQAAAAAGVPTAALARRNSDVFQRMQEALNISFDRFIRTTDADHHEASKELWRRMSAAGDIYLDNYSGWYSVRDERFFVESETQLVDGTRLTVETGTPVTWTEEQTYFFRLSAYTDKLLAHYHANPDFIAPETRRNEVISFVSGGLDDLSISRTSFDWGVQVPEHPDHVMYVWVDALTNYLTGAGFPDTDSELFRRYWPADLHMIGKDIIRFHAVYWPAFLMSAGIELPRRIFAHGFLHNRGEKMSKSVGNIVDPVALAEALGVDQVRYFLLREVPFGQDGSYSDEAIVTRINTDLANELGNLAQRSLSMVAKNLDGRVPNPGEFADADAALLATADGLLERVRGHFDAQAMHLALEAIWLMLGDANKYFSVQQPWVLRKSESEADQARFRTTLYVTCEVVRIAALLIQPVMPESAGKILDLLGQAPNQRSFAAVGVRLTPGTALPPPTGVFPRYQPPQPPEGK</sequence>
<dbReference type="EC" id="6.1.1.10"/>
<dbReference type="EMBL" id="AE000516">
    <property type="protein sequence ID" value="AAK45286.1"/>
    <property type="molecule type" value="Genomic_DNA"/>
</dbReference>
<dbReference type="PIR" id="B70603">
    <property type="entry name" value="B70603"/>
</dbReference>
<dbReference type="RefSeq" id="WP_003405183.1">
    <property type="nucleotide sequence ID" value="NZ_KK341227.1"/>
</dbReference>
<dbReference type="SMR" id="P9WFU4"/>
<dbReference type="GeneID" id="45424979"/>
<dbReference type="KEGG" id="mtc:MT1036"/>
<dbReference type="PATRIC" id="fig|83331.31.peg.1111"/>
<dbReference type="HOGENOM" id="CLU_009710_9_4_11"/>
<dbReference type="Proteomes" id="UP000001020">
    <property type="component" value="Chromosome"/>
</dbReference>
<dbReference type="GO" id="GO:0005737">
    <property type="term" value="C:cytoplasm"/>
    <property type="evidence" value="ECO:0007669"/>
    <property type="project" value="UniProtKB-SubCell"/>
</dbReference>
<dbReference type="GO" id="GO:0005524">
    <property type="term" value="F:ATP binding"/>
    <property type="evidence" value="ECO:0007669"/>
    <property type="project" value="UniProtKB-UniRule"/>
</dbReference>
<dbReference type="GO" id="GO:0004825">
    <property type="term" value="F:methionine-tRNA ligase activity"/>
    <property type="evidence" value="ECO:0007669"/>
    <property type="project" value="UniProtKB-UniRule"/>
</dbReference>
<dbReference type="GO" id="GO:0006431">
    <property type="term" value="P:methionyl-tRNA aminoacylation"/>
    <property type="evidence" value="ECO:0007669"/>
    <property type="project" value="UniProtKB-UniRule"/>
</dbReference>
<dbReference type="CDD" id="cd07957">
    <property type="entry name" value="Anticodon_Ia_Met"/>
    <property type="match status" value="1"/>
</dbReference>
<dbReference type="CDD" id="cd00814">
    <property type="entry name" value="MetRS_core"/>
    <property type="match status" value="1"/>
</dbReference>
<dbReference type="FunFam" id="1.10.730.10:FF:000035">
    <property type="entry name" value="Methionine--tRNA ligase"/>
    <property type="match status" value="1"/>
</dbReference>
<dbReference type="FunFam" id="2.170.220.10:FF:000002">
    <property type="entry name" value="Methionine--tRNA ligase"/>
    <property type="match status" value="1"/>
</dbReference>
<dbReference type="Gene3D" id="2.170.220.10">
    <property type="match status" value="1"/>
</dbReference>
<dbReference type="Gene3D" id="3.40.50.620">
    <property type="entry name" value="HUPs"/>
    <property type="match status" value="1"/>
</dbReference>
<dbReference type="Gene3D" id="1.10.730.10">
    <property type="entry name" value="Isoleucyl-tRNA Synthetase, Domain 1"/>
    <property type="match status" value="1"/>
</dbReference>
<dbReference type="HAMAP" id="MF_01228">
    <property type="entry name" value="Met_tRNA_synth_type2"/>
    <property type="match status" value="1"/>
</dbReference>
<dbReference type="InterPro" id="IPR001412">
    <property type="entry name" value="aa-tRNA-synth_I_CS"/>
</dbReference>
<dbReference type="InterPro" id="IPR041872">
    <property type="entry name" value="Anticodon_Met"/>
</dbReference>
<dbReference type="InterPro" id="IPR014758">
    <property type="entry name" value="Met-tRNA_synth"/>
</dbReference>
<dbReference type="InterPro" id="IPR023457">
    <property type="entry name" value="Met-tRNA_synth_2"/>
</dbReference>
<dbReference type="InterPro" id="IPR015413">
    <property type="entry name" value="Methionyl/Leucyl_tRNA_Synth"/>
</dbReference>
<dbReference type="InterPro" id="IPR033911">
    <property type="entry name" value="MetRS_core"/>
</dbReference>
<dbReference type="InterPro" id="IPR014729">
    <property type="entry name" value="Rossmann-like_a/b/a_fold"/>
</dbReference>
<dbReference type="InterPro" id="IPR009080">
    <property type="entry name" value="tRNAsynth_Ia_anticodon-bd"/>
</dbReference>
<dbReference type="NCBIfam" id="TIGR00398">
    <property type="entry name" value="metG"/>
    <property type="match status" value="1"/>
</dbReference>
<dbReference type="NCBIfam" id="NF008900">
    <property type="entry name" value="PRK12267.1"/>
    <property type="match status" value="1"/>
</dbReference>
<dbReference type="PANTHER" id="PTHR43326:SF1">
    <property type="entry name" value="METHIONINE--TRNA LIGASE, MITOCHONDRIAL"/>
    <property type="match status" value="1"/>
</dbReference>
<dbReference type="PANTHER" id="PTHR43326">
    <property type="entry name" value="METHIONYL-TRNA SYNTHETASE"/>
    <property type="match status" value="1"/>
</dbReference>
<dbReference type="Pfam" id="PF19303">
    <property type="entry name" value="Anticodon_3"/>
    <property type="match status" value="1"/>
</dbReference>
<dbReference type="Pfam" id="PF09334">
    <property type="entry name" value="tRNA-synt_1g"/>
    <property type="match status" value="2"/>
</dbReference>
<dbReference type="PRINTS" id="PR01041">
    <property type="entry name" value="TRNASYNTHMET"/>
</dbReference>
<dbReference type="SUPFAM" id="SSF47323">
    <property type="entry name" value="Anticodon-binding domain of a subclass of class I aminoacyl-tRNA synthetases"/>
    <property type="match status" value="1"/>
</dbReference>
<dbReference type="SUPFAM" id="SSF52374">
    <property type="entry name" value="Nucleotidylyl transferase"/>
    <property type="match status" value="1"/>
</dbReference>
<dbReference type="PROSITE" id="PS00178">
    <property type="entry name" value="AA_TRNA_LIGASE_I"/>
    <property type="match status" value="1"/>
</dbReference>
<feature type="chain" id="PRO_0000428476" description="Methionine--tRNA ligase">
    <location>
        <begin position="1"/>
        <end position="519"/>
    </location>
</feature>
<feature type="region of interest" description="Disordered" evidence="2">
    <location>
        <begin position="500"/>
        <end position="519"/>
    </location>
</feature>
<feature type="short sequence motif" description="'HIGH' region">
    <location>
        <begin position="11"/>
        <end position="21"/>
    </location>
</feature>
<feature type="short sequence motif" description="'KMSKS' region">
    <location>
        <begin position="299"/>
        <end position="303"/>
    </location>
</feature>
<feature type="binding site" evidence="1">
    <location>
        <position position="302"/>
    </location>
    <ligand>
        <name>ATP</name>
        <dbReference type="ChEBI" id="CHEBI:30616"/>
    </ligand>
</feature>
<proteinExistence type="inferred from homology"/>
<accession>P9WFU4</accession>
<accession>L0T8C8</accession>
<accession>O05593</accession>
<keyword id="KW-0030">Aminoacyl-tRNA synthetase</keyword>
<keyword id="KW-0067">ATP-binding</keyword>
<keyword id="KW-0963">Cytoplasm</keyword>
<keyword id="KW-0436">Ligase</keyword>
<keyword id="KW-0547">Nucleotide-binding</keyword>
<keyword id="KW-0648">Protein biosynthesis</keyword>
<keyword id="KW-1185">Reference proteome</keyword>
<name>SYM_MYCTO</name>
<reference key="1">
    <citation type="journal article" date="2002" name="J. Bacteriol.">
        <title>Whole-genome comparison of Mycobacterium tuberculosis clinical and laboratory strains.</title>
        <authorList>
            <person name="Fleischmann R.D."/>
            <person name="Alland D."/>
            <person name="Eisen J.A."/>
            <person name="Carpenter L."/>
            <person name="White O."/>
            <person name="Peterson J.D."/>
            <person name="DeBoy R.T."/>
            <person name="Dodson R.J."/>
            <person name="Gwinn M.L."/>
            <person name="Haft D.H."/>
            <person name="Hickey E.K."/>
            <person name="Kolonay J.F."/>
            <person name="Nelson W.C."/>
            <person name="Umayam L.A."/>
            <person name="Ermolaeva M.D."/>
            <person name="Salzberg S.L."/>
            <person name="Delcher A."/>
            <person name="Utterback T.R."/>
            <person name="Weidman J.F."/>
            <person name="Khouri H.M."/>
            <person name="Gill J."/>
            <person name="Mikula A."/>
            <person name="Bishai W."/>
            <person name="Jacobs W.R. Jr."/>
            <person name="Venter J.C."/>
            <person name="Fraser C.M."/>
        </authorList>
    </citation>
    <scope>NUCLEOTIDE SEQUENCE [LARGE SCALE GENOMIC DNA]</scope>
    <source>
        <strain>CDC 1551 / Oshkosh</strain>
    </source>
</reference>
<organism>
    <name type="scientific">Mycobacterium tuberculosis (strain CDC 1551 / Oshkosh)</name>
    <dbReference type="NCBI Taxonomy" id="83331"/>
    <lineage>
        <taxon>Bacteria</taxon>
        <taxon>Bacillati</taxon>
        <taxon>Actinomycetota</taxon>
        <taxon>Actinomycetes</taxon>
        <taxon>Mycobacteriales</taxon>
        <taxon>Mycobacteriaceae</taxon>
        <taxon>Mycobacterium</taxon>
        <taxon>Mycobacterium tuberculosis complex</taxon>
    </lineage>
</organism>
<gene>
    <name type="primary">metG</name>
    <name type="synonym">metS</name>
    <name type="ordered locus">MT1036</name>
</gene>
<protein>
    <recommendedName>
        <fullName>Methionine--tRNA ligase</fullName>
        <ecNumber>6.1.1.10</ecNumber>
    </recommendedName>
    <alternativeName>
        <fullName>Methionyl-tRNA synthetase</fullName>
        <shortName>MetRS</shortName>
    </alternativeName>
</protein>
<evidence type="ECO:0000250" key="1"/>
<evidence type="ECO:0000256" key="2">
    <source>
        <dbReference type="SAM" id="MobiDB-lite"/>
    </source>
</evidence>
<evidence type="ECO:0000305" key="3"/>
<comment type="function">
    <text evidence="1">Is required not only for elongation of protein synthesis but also for the initiation of all mRNA translation through initiator tRNA(fMet) aminoacylation.</text>
</comment>
<comment type="catalytic activity">
    <reaction>
        <text>tRNA(Met) + L-methionine + ATP = L-methionyl-tRNA(Met) + AMP + diphosphate</text>
        <dbReference type="Rhea" id="RHEA:13481"/>
        <dbReference type="Rhea" id="RHEA-COMP:9667"/>
        <dbReference type="Rhea" id="RHEA-COMP:9698"/>
        <dbReference type="ChEBI" id="CHEBI:30616"/>
        <dbReference type="ChEBI" id="CHEBI:33019"/>
        <dbReference type="ChEBI" id="CHEBI:57844"/>
        <dbReference type="ChEBI" id="CHEBI:78442"/>
        <dbReference type="ChEBI" id="CHEBI:78530"/>
        <dbReference type="ChEBI" id="CHEBI:456215"/>
        <dbReference type="EC" id="6.1.1.10"/>
    </reaction>
</comment>
<comment type="subunit">
    <text evidence="1">Monomer.</text>
</comment>
<comment type="subcellular location">
    <subcellularLocation>
        <location evidence="1">Cytoplasm</location>
    </subcellularLocation>
</comment>
<comment type="similarity">
    <text evidence="3">Belongs to the class-I aminoacyl-tRNA synthetase family. MetG type 2B subfamily.</text>
</comment>